<feature type="chain" id="PRO_1000064502" description="UPF0253 protein Ent638_0728">
    <location>
        <begin position="1"/>
        <end position="66"/>
    </location>
</feature>
<organism>
    <name type="scientific">Enterobacter sp. (strain 638)</name>
    <dbReference type="NCBI Taxonomy" id="399742"/>
    <lineage>
        <taxon>Bacteria</taxon>
        <taxon>Pseudomonadati</taxon>
        <taxon>Pseudomonadota</taxon>
        <taxon>Gammaproteobacteria</taxon>
        <taxon>Enterobacterales</taxon>
        <taxon>Enterobacteriaceae</taxon>
        <taxon>Enterobacter</taxon>
    </lineage>
</organism>
<accession>A4W6T5</accession>
<protein>
    <recommendedName>
        <fullName evidence="1">UPF0253 protein Ent638_0728</fullName>
    </recommendedName>
</protein>
<name>Y728_ENT38</name>
<evidence type="ECO:0000255" key="1">
    <source>
        <dbReference type="HAMAP-Rule" id="MF_01064"/>
    </source>
</evidence>
<gene>
    <name type="ordered locus">Ent638_0728</name>
</gene>
<reference key="1">
    <citation type="journal article" date="2010" name="PLoS Genet.">
        <title>Genome sequence of the plant growth promoting endophytic bacterium Enterobacter sp. 638.</title>
        <authorList>
            <person name="Taghavi S."/>
            <person name="van der Lelie D."/>
            <person name="Hoffman A."/>
            <person name="Zhang Y.B."/>
            <person name="Walla M.D."/>
            <person name="Vangronsveld J."/>
            <person name="Newman L."/>
            <person name="Monchy S."/>
        </authorList>
    </citation>
    <scope>NUCLEOTIDE SEQUENCE [LARGE SCALE GENOMIC DNA]</scope>
    <source>
        <strain>638</strain>
    </source>
</reference>
<dbReference type="EMBL" id="CP000653">
    <property type="protein sequence ID" value="ABP59415.1"/>
    <property type="molecule type" value="Genomic_DNA"/>
</dbReference>
<dbReference type="RefSeq" id="WP_012016136.1">
    <property type="nucleotide sequence ID" value="NC_009436.1"/>
</dbReference>
<dbReference type="SMR" id="A4W6T5"/>
<dbReference type="STRING" id="399742.Ent638_0728"/>
<dbReference type="KEGG" id="ent:Ent638_0728"/>
<dbReference type="eggNOG" id="ENOG5032Z3X">
    <property type="taxonomic scope" value="Bacteria"/>
</dbReference>
<dbReference type="HOGENOM" id="CLU_190008_0_0_6"/>
<dbReference type="OrthoDB" id="5900992at2"/>
<dbReference type="Proteomes" id="UP000000230">
    <property type="component" value="Chromosome"/>
</dbReference>
<dbReference type="HAMAP" id="MF_01064">
    <property type="entry name" value="UPF0253"/>
    <property type="match status" value="1"/>
</dbReference>
<dbReference type="InterPro" id="IPR009624">
    <property type="entry name" value="UPF0253"/>
</dbReference>
<dbReference type="NCBIfam" id="NF003436">
    <property type="entry name" value="PRK04964.1"/>
    <property type="match status" value="1"/>
</dbReference>
<dbReference type="Pfam" id="PF06786">
    <property type="entry name" value="UPF0253"/>
    <property type="match status" value="1"/>
</dbReference>
<comment type="similarity">
    <text evidence="1">Belongs to the UPF0253 family.</text>
</comment>
<proteinExistence type="inferred from homology"/>
<sequence length="66" mass="7256">MEIYCELIRKRYAEIASGDLGYIPDALGCVLKVLNEVATDNSLSESIREKAAYAAANLLVSDYVNE</sequence>